<sequence length="347" mass="39795">MVENIIELRDISKHYEELTVLDNFNLDIKKNEFLTLLGPSGCGKTTTLKIIAGFEYADDGKVLFEGKEINNLPPYERQVNTVFQKYALFPHMDVYENVAFGLKIKKTPKDVIDAKVKEVLKLVALEGFERRQVESLSGGQQQRIAIARALVNEPKVLLLDEPLGALDLKLRQEMQIELKRIQKKLGITFVFVTHDQEEALTMSDTIVVMYKGKIQQMGTPQDIYNEPKNSFVAKFIGESNIFDGIMIEDYKVNFCNRDFECVDKGFEKNENIEVVIRPEDIKMVKPEEGMLKGKVTSTVFKGVHYEIELNENGRLWILHNTKNAEVGTELGMDIYPEDIHIMRKENN</sequence>
<reference key="1">
    <citation type="journal article" date="2006" name="Nat. Genet.">
        <title>The multidrug-resistant human pathogen Clostridium difficile has a highly mobile, mosaic genome.</title>
        <authorList>
            <person name="Sebaihia M."/>
            <person name="Wren B.W."/>
            <person name="Mullany P."/>
            <person name="Fairweather N.F."/>
            <person name="Minton N."/>
            <person name="Stabler R."/>
            <person name="Thomson N.R."/>
            <person name="Roberts A.P."/>
            <person name="Cerdeno-Tarraga A.M."/>
            <person name="Wang H."/>
            <person name="Holden M.T.G."/>
            <person name="Wright A."/>
            <person name="Churcher C."/>
            <person name="Quail M.A."/>
            <person name="Baker S."/>
            <person name="Bason N."/>
            <person name="Brooks K."/>
            <person name="Chillingworth T."/>
            <person name="Cronin A."/>
            <person name="Davis P."/>
            <person name="Dowd L."/>
            <person name="Fraser A."/>
            <person name="Feltwell T."/>
            <person name="Hance Z."/>
            <person name="Holroyd S."/>
            <person name="Jagels K."/>
            <person name="Moule S."/>
            <person name="Mungall K."/>
            <person name="Price C."/>
            <person name="Rabbinowitsch E."/>
            <person name="Sharp S."/>
            <person name="Simmonds M."/>
            <person name="Stevens K."/>
            <person name="Unwin L."/>
            <person name="Whithead S."/>
            <person name="Dupuy B."/>
            <person name="Dougan G."/>
            <person name="Barrell B."/>
            <person name="Parkhill J."/>
        </authorList>
    </citation>
    <scope>NUCLEOTIDE SEQUENCE [LARGE SCALE GENOMIC DNA]</scope>
    <source>
        <strain>630</strain>
    </source>
</reference>
<evidence type="ECO:0000255" key="1">
    <source>
        <dbReference type="HAMAP-Rule" id="MF_01726"/>
    </source>
</evidence>
<proteinExistence type="inferred from homology"/>
<dbReference type="EC" id="7.6.2.11" evidence="1"/>
<dbReference type="EMBL" id="AM180355">
    <property type="protein sequence ID" value="CAJ67865.1"/>
    <property type="molecule type" value="Genomic_DNA"/>
</dbReference>
<dbReference type="RefSeq" id="WP_003437017.1">
    <property type="nucleotide sequence ID" value="NZ_JAUPES010000048.1"/>
</dbReference>
<dbReference type="RefSeq" id="YP_001087505.1">
    <property type="nucleotide sequence ID" value="NC_009089.1"/>
</dbReference>
<dbReference type="SMR" id="Q18AM3"/>
<dbReference type="STRING" id="272563.CD630_10240"/>
<dbReference type="EnsemblBacteria" id="CAJ67865">
    <property type="protein sequence ID" value="CAJ67865"/>
    <property type="gene ID" value="CD630_10240"/>
</dbReference>
<dbReference type="GeneID" id="66353451"/>
<dbReference type="KEGG" id="cdf:CD630_10240"/>
<dbReference type="KEGG" id="pdc:CDIF630_01160"/>
<dbReference type="PATRIC" id="fig|272563.120.peg.1064"/>
<dbReference type="eggNOG" id="COG3842">
    <property type="taxonomic scope" value="Bacteria"/>
</dbReference>
<dbReference type="OrthoDB" id="9802264at2"/>
<dbReference type="PhylomeDB" id="Q18AM3"/>
<dbReference type="BioCyc" id="PDIF272563:G12WB-1139-MONOMER"/>
<dbReference type="Proteomes" id="UP000001978">
    <property type="component" value="Chromosome"/>
</dbReference>
<dbReference type="GO" id="GO:0043190">
    <property type="term" value="C:ATP-binding cassette (ABC) transporter complex"/>
    <property type="evidence" value="ECO:0007669"/>
    <property type="project" value="InterPro"/>
</dbReference>
<dbReference type="GO" id="GO:0015594">
    <property type="term" value="F:ABC-type putrescine transporter activity"/>
    <property type="evidence" value="ECO:0007669"/>
    <property type="project" value="InterPro"/>
</dbReference>
<dbReference type="GO" id="GO:0005524">
    <property type="term" value="F:ATP binding"/>
    <property type="evidence" value="ECO:0007669"/>
    <property type="project" value="UniProtKB-KW"/>
</dbReference>
<dbReference type="GO" id="GO:0016887">
    <property type="term" value="F:ATP hydrolysis activity"/>
    <property type="evidence" value="ECO:0007669"/>
    <property type="project" value="InterPro"/>
</dbReference>
<dbReference type="CDD" id="cd03300">
    <property type="entry name" value="ABC_PotA_N"/>
    <property type="match status" value="1"/>
</dbReference>
<dbReference type="FunFam" id="3.40.50.300:FF:000133">
    <property type="entry name" value="Spermidine/putrescine import ATP-binding protein PotA"/>
    <property type="match status" value="1"/>
</dbReference>
<dbReference type="Gene3D" id="2.40.50.100">
    <property type="match status" value="1"/>
</dbReference>
<dbReference type="Gene3D" id="3.40.50.300">
    <property type="entry name" value="P-loop containing nucleotide triphosphate hydrolases"/>
    <property type="match status" value="1"/>
</dbReference>
<dbReference type="InterPro" id="IPR003593">
    <property type="entry name" value="AAA+_ATPase"/>
</dbReference>
<dbReference type="InterPro" id="IPR050093">
    <property type="entry name" value="ABC_SmlMolc_Importer"/>
</dbReference>
<dbReference type="InterPro" id="IPR003439">
    <property type="entry name" value="ABC_transporter-like_ATP-bd"/>
</dbReference>
<dbReference type="InterPro" id="IPR017871">
    <property type="entry name" value="ABC_transporter-like_CS"/>
</dbReference>
<dbReference type="InterPro" id="IPR008995">
    <property type="entry name" value="Mo/tungstate-bd_C_term_dom"/>
</dbReference>
<dbReference type="InterPro" id="IPR027417">
    <property type="entry name" value="P-loop_NTPase"/>
</dbReference>
<dbReference type="InterPro" id="IPR005893">
    <property type="entry name" value="PotA-like"/>
</dbReference>
<dbReference type="InterPro" id="IPR017879">
    <property type="entry name" value="PotA_ATP-bd"/>
</dbReference>
<dbReference type="InterPro" id="IPR013611">
    <property type="entry name" value="Transp-assoc_OB_typ2"/>
</dbReference>
<dbReference type="NCBIfam" id="NF043075">
    <property type="entry name" value="MMSYN1_0197"/>
    <property type="match status" value="1"/>
</dbReference>
<dbReference type="NCBIfam" id="TIGR01187">
    <property type="entry name" value="potA"/>
    <property type="match status" value="1"/>
</dbReference>
<dbReference type="PANTHER" id="PTHR42781">
    <property type="entry name" value="SPERMIDINE/PUTRESCINE IMPORT ATP-BINDING PROTEIN POTA"/>
    <property type="match status" value="1"/>
</dbReference>
<dbReference type="PANTHER" id="PTHR42781:SF4">
    <property type="entry name" value="SPERMIDINE_PUTRESCINE IMPORT ATP-BINDING PROTEIN POTA"/>
    <property type="match status" value="1"/>
</dbReference>
<dbReference type="Pfam" id="PF00005">
    <property type="entry name" value="ABC_tran"/>
    <property type="match status" value="1"/>
</dbReference>
<dbReference type="Pfam" id="PF08402">
    <property type="entry name" value="TOBE_2"/>
    <property type="match status" value="1"/>
</dbReference>
<dbReference type="SMART" id="SM00382">
    <property type="entry name" value="AAA"/>
    <property type="match status" value="1"/>
</dbReference>
<dbReference type="SUPFAM" id="SSF50331">
    <property type="entry name" value="MOP-like"/>
    <property type="match status" value="1"/>
</dbReference>
<dbReference type="SUPFAM" id="SSF52540">
    <property type="entry name" value="P-loop containing nucleoside triphosphate hydrolases"/>
    <property type="match status" value="1"/>
</dbReference>
<dbReference type="PROSITE" id="PS00211">
    <property type="entry name" value="ABC_TRANSPORTER_1"/>
    <property type="match status" value="1"/>
</dbReference>
<dbReference type="PROSITE" id="PS50893">
    <property type="entry name" value="ABC_TRANSPORTER_2"/>
    <property type="match status" value="1"/>
</dbReference>
<dbReference type="PROSITE" id="PS51305">
    <property type="entry name" value="POTA"/>
    <property type="match status" value="1"/>
</dbReference>
<comment type="function">
    <text evidence="1">Part of the ABC transporter complex PotABCD involved in spermidine/putrescine import. Responsible for energy coupling to the transport system.</text>
</comment>
<comment type="catalytic activity">
    <reaction evidence="1">
        <text>ATP + H2O + polyamine-[polyamine-binding protein]Side 1 = ADP + phosphate + polyamineSide 2 + [polyamine-binding protein]Side 1.</text>
        <dbReference type="EC" id="7.6.2.11"/>
    </reaction>
</comment>
<comment type="subunit">
    <text evidence="1">The complex is composed of two ATP-binding proteins (PotA), two transmembrane proteins (PotB and PotC) and a solute-binding protein (PotD).</text>
</comment>
<comment type="subcellular location">
    <subcellularLocation>
        <location evidence="1">Cell membrane</location>
        <topology evidence="1">Peripheral membrane protein</topology>
    </subcellularLocation>
</comment>
<comment type="similarity">
    <text evidence="1">Belongs to the ABC transporter superfamily. Spermidine/putrescine importer (TC 3.A.1.11.1) family.</text>
</comment>
<keyword id="KW-0067">ATP-binding</keyword>
<keyword id="KW-1003">Cell membrane</keyword>
<keyword id="KW-0472">Membrane</keyword>
<keyword id="KW-0547">Nucleotide-binding</keyword>
<keyword id="KW-1185">Reference proteome</keyword>
<keyword id="KW-1278">Translocase</keyword>
<keyword id="KW-0813">Transport</keyword>
<name>POTA_CLOD6</name>
<organism>
    <name type="scientific">Clostridioides difficile (strain 630)</name>
    <name type="common">Peptoclostridium difficile</name>
    <dbReference type="NCBI Taxonomy" id="272563"/>
    <lineage>
        <taxon>Bacteria</taxon>
        <taxon>Bacillati</taxon>
        <taxon>Bacillota</taxon>
        <taxon>Clostridia</taxon>
        <taxon>Peptostreptococcales</taxon>
        <taxon>Peptostreptococcaceae</taxon>
        <taxon>Clostridioides</taxon>
    </lineage>
</organism>
<accession>Q18AM3</accession>
<feature type="chain" id="PRO_0000286205" description="Spermidine/putrescine import ATP-binding protein PotA">
    <location>
        <begin position="1"/>
        <end position="347"/>
    </location>
</feature>
<feature type="domain" description="ABC transporter" evidence="1">
    <location>
        <begin position="6"/>
        <end position="236"/>
    </location>
</feature>
<feature type="binding site" evidence="1">
    <location>
        <begin position="38"/>
        <end position="45"/>
    </location>
    <ligand>
        <name>ATP</name>
        <dbReference type="ChEBI" id="CHEBI:30616"/>
    </ligand>
</feature>
<protein>
    <recommendedName>
        <fullName evidence="1">Spermidine/putrescine import ATP-binding protein PotA</fullName>
        <ecNumber evidence="1">7.6.2.11</ecNumber>
    </recommendedName>
</protein>
<gene>
    <name evidence="1" type="primary">potA</name>
    <name type="ordered locus">CD630_10240</name>
</gene>